<reference key="1">
    <citation type="submission" date="2007-05" db="EMBL/GenBank/DDBJ databases">
        <title>Complete sequence of Thermotoga petrophila RKU-1.</title>
        <authorList>
            <consortium name="US DOE Joint Genome Institute"/>
            <person name="Copeland A."/>
            <person name="Lucas S."/>
            <person name="Lapidus A."/>
            <person name="Barry K."/>
            <person name="Glavina del Rio T."/>
            <person name="Dalin E."/>
            <person name="Tice H."/>
            <person name="Pitluck S."/>
            <person name="Sims D."/>
            <person name="Brettin T."/>
            <person name="Bruce D."/>
            <person name="Detter J.C."/>
            <person name="Han C."/>
            <person name="Tapia R."/>
            <person name="Schmutz J."/>
            <person name="Larimer F."/>
            <person name="Land M."/>
            <person name="Hauser L."/>
            <person name="Kyrpides N."/>
            <person name="Mikhailova N."/>
            <person name="Nelson K."/>
            <person name="Gogarten J.P."/>
            <person name="Noll K."/>
            <person name="Richardson P."/>
        </authorList>
    </citation>
    <scope>NUCLEOTIDE SEQUENCE [LARGE SCALE GENOMIC DNA]</scope>
    <source>
        <strain>ATCC BAA-488 / DSM 13995 / JCM 10881 / RKU-1</strain>
    </source>
</reference>
<proteinExistence type="inferred from homology"/>
<accession>A5IMC9</accession>
<comment type="similarity">
    <text evidence="1">Belongs to the bacterial ribosomal protein bL27 family.</text>
</comment>
<feature type="chain" id="PRO_1000017638" description="Large ribosomal subunit protein bL27">
    <location>
        <begin position="1"/>
        <end position="83"/>
    </location>
</feature>
<gene>
    <name evidence="1" type="primary">rpmA</name>
    <name type="ordered locus">Tpet_1338</name>
</gene>
<sequence>MAHKKSGGVAKNGRDSLPKYLGVKVGDGQIVKAGNILVRQRGTRFYPGKNVGMGRDFTLFALKDGRVKFETKNNKKYVSVYEE</sequence>
<protein>
    <recommendedName>
        <fullName evidence="1">Large ribosomal subunit protein bL27</fullName>
    </recommendedName>
    <alternativeName>
        <fullName evidence="2">50S ribosomal protein L27</fullName>
    </alternativeName>
</protein>
<name>RL27_THEP1</name>
<organism>
    <name type="scientific">Thermotoga petrophila (strain ATCC BAA-488 / DSM 13995 / JCM 10881 / RKU-1)</name>
    <dbReference type="NCBI Taxonomy" id="390874"/>
    <lineage>
        <taxon>Bacteria</taxon>
        <taxon>Thermotogati</taxon>
        <taxon>Thermotogota</taxon>
        <taxon>Thermotogae</taxon>
        <taxon>Thermotogales</taxon>
        <taxon>Thermotogaceae</taxon>
        <taxon>Thermotoga</taxon>
    </lineage>
</organism>
<dbReference type="EMBL" id="CP000702">
    <property type="protein sequence ID" value="ABQ47352.1"/>
    <property type="molecule type" value="Genomic_DNA"/>
</dbReference>
<dbReference type="RefSeq" id="WP_004081742.1">
    <property type="nucleotide sequence ID" value="NC_009486.1"/>
</dbReference>
<dbReference type="SMR" id="A5IMC9"/>
<dbReference type="STRING" id="390874.Tpet_1338"/>
<dbReference type="KEGG" id="tpt:Tpet_1338"/>
<dbReference type="eggNOG" id="COG0211">
    <property type="taxonomic scope" value="Bacteria"/>
</dbReference>
<dbReference type="HOGENOM" id="CLU_095424_4_1_0"/>
<dbReference type="Proteomes" id="UP000006558">
    <property type="component" value="Chromosome"/>
</dbReference>
<dbReference type="GO" id="GO:0022625">
    <property type="term" value="C:cytosolic large ribosomal subunit"/>
    <property type="evidence" value="ECO:0007669"/>
    <property type="project" value="TreeGrafter"/>
</dbReference>
<dbReference type="GO" id="GO:0003735">
    <property type="term" value="F:structural constituent of ribosome"/>
    <property type="evidence" value="ECO:0007669"/>
    <property type="project" value="InterPro"/>
</dbReference>
<dbReference type="GO" id="GO:0006412">
    <property type="term" value="P:translation"/>
    <property type="evidence" value="ECO:0007669"/>
    <property type="project" value="UniProtKB-UniRule"/>
</dbReference>
<dbReference type="FunFam" id="2.40.50.100:FF:000085">
    <property type="entry name" value="50S ribosomal protein L27"/>
    <property type="match status" value="1"/>
</dbReference>
<dbReference type="Gene3D" id="2.40.50.100">
    <property type="match status" value="1"/>
</dbReference>
<dbReference type="HAMAP" id="MF_00539">
    <property type="entry name" value="Ribosomal_bL27"/>
    <property type="match status" value="1"/>
</dbReference>
<dbReference type="InterPro" id="IPR001684">
    <property type="entry name" value="Ribosomal_bL27"/>
</dbReference>
<dbReference type="InterPro" id="IPR018261">
    <property type="entry name" value="Ribosomal_bL27_CS"/>
</dbReference>
<dbReference type="NCBIfam" id="TIGR00062">
    <property type="entry name" value="L27"/>
    <property type="match status" value="1"/>
</dbReference>
<dbReference type="PANTHER" id="PTHR15893:SF0">
    <property type="entry name" value="LARGE RIBOSOMAL SUBUNIT PROTEIN BL27M"/>
    <property type="match status" value="1"/>
</dbReference>
<dbReference type="PANTHER" id="PTHR15893">
    <property type="entry name" value="RIBOSOMAL PROTEIN L27"/>
    <property type="match status" value="1"/>
</dbReference>
<dbReference type="Pfam" id="PF01016">
    <property type="entry name" value="Ribosomal_L27"/>
    <property type="match status" value="1"/>
</dbReference>
<dbReference type="PRINTS" id="PR00063">
    <property type="entry name" value="RIBOSOMALL27"/>
</dbReference>
<dbReference type="SUPFAM" id="SSF110324">
    <property type="entry name" value="Ribosomal L27 protein-like"/>
    <property type="match status" value="1"/>
</dbReference>
<dbReference type="PROSITE" id="PS00831">
    <property type="entry name" value="RIBOSOMAL_L27"/>
    <property type="match status" value="1"/>
</dbReference>
<evidence type="ECO:0000255" key="1">
    <source>
        <dbReference type="HAMAP-Rule" id="MF_00539"/>
    </source>
</evidence>
<evidence type="ECO:0000305" key="2"/>
<keyword id="KW-0687">Ribonucleoprotein</keyword>
<keyword id="KW-0689">Ribosomal protein</keyword>